<organism>
    <name type="scientific">Vaccinia virus (strain Western Reserve)</name>
    <name type="common">VACV</name>
    <name type="synonym">Vaccinia virus (strain WR)</name>
    <dbReference type="NCBI Taxonomy" id="10254"/>
    <lineage>
        <taxon>Viruses</taxon>
        <taxon>Varidnaviria</taxon>
        <taxon>Bamfordvirae</taxon>
        <taxon>Nucleocytoviricota</taxon>
        <taxon>Pokkesviricetes</taxon>
        <taxon>Chitovirales</taxon>
        <taxon>Poxviridae</taxon>
        <taxon>Chordopoxvirinae</taxon>
        <taxon>Orthopoxvirus</taxon>
        <taxon>Vaccinia virus</taxon>
    </lineage>
</organism>
<keyword id="KW-0436">Ligase</keyword>
<keyword id="KW-0479">Metal-binding</keyword>
<keyword id="KW-1185">Reference proteome</keyword>
<keyword id="KW-0833">Ubl conjugation pathway</keyword>
<keyword id="KW-0862">Zinc</keyword>
<keyword id="KW-0863">Zinc-finger</keyword>
<reference key="1">
    <citation type="submission" date="2003-02" db="EMBL/GenBank/DDBJ databases">
        <title>Sequencing of the coding region of Vaccinia-WR to an average 9-fold redundancy and an error rate of 0.16/10kb.</title>
        <authorList>
            <person name="Esposito J.J."/>
            <person name="Frace A.M."/>
            <person name="Sammons S.A."/>
            <person name="Olsen-Rasmussen M."/>
            <person name="Osborne J."/>
            <person name="Wohlhueter R."/>
        </authorList>
    </citation>
    <scope>NUCLEOTIDE SEQUENCE [LARGE SCALE GENOMIC DNA]</scope>
</reference>
<sequence length="62" mass="7424">MKLFTQNDRYFGLLDSCTHIFCITCINIWHKTRRETGASDNCPICRTRFRNITMSKFYKLVN</sequence>
<protein>
    <recommendedName>
        <fullName>Zinc finger-containing protein P28b</fullName>
    </recommendedName>
</protein>
<name>P28B_VACCW</name>
<evidence type="ECO:0000250" key="1"/>
<evidence type="ECO:0000255" key="2">
    <source>
        <dbReference type="PROSITE-ProRule" id="PRU00175"/>
    </source>
</evidence>
<feature type="chain" id="PRO_0000412617" description="Zinc finger-containing protein P28b">
    <location>
        <begin position="1"/>
        <end position="62"/>
    </location>
</feature>
<feature type="zinc finger region" description="RING-type; degenerate" evidence="2">
    <location>
        <begin position="1"/>
        <end position="46"/>
    </location>
</feature>
<gene>
    <name type="ordered locus">VACWR012</name>
</gene>
<gene>
    <name type="ordered locus">VACWR207</name>
</gene>
<accession>Q805K3</accession>
<dbReference type="EMBL" id="AY243312">
    <property type="protein sequence ID" value="AAO89291.1"/>
    <property type="molecule type" value="Genomic_DNA"/>
</dbReference>
<dbReference type="EMBL" id="AY243312">
    <property type="protein sequence ID" value="AAO89486.1"/>
    <property type="molecule type" value="Genomic_DNA"/>
</dbReference>
<dbReference type="RefSeq" id="YP_232894.1">
    <property type="nucleotide sequence ID" value="NC_006998.1"/>
</dbReference>
<dbReference type="RefSeq" id="YP_233089.1">
    <property type="nucleotide sequence ID" value="NC_006998.1"/>
</dbReference>
<dbReference type="SMR" id="Q805K3"/>
<dbReference type="DNASU" id="3707627"/>
<dbReference type="GeneID" id="3707584"/>
<dbReference type="GeneID" id="3707627"/>
<dbReference type="KEGG" id="vg:3707584"/>
<dbReference type="KEGG" id="vg:3707627"/>
<dbReference type="Proteomes" id="UP000000344">
    <property type="component" value="Genome"/>
</dbReference>
<dbReference type="GO" id="GO:0016874">
    <property type="term" value="F:ligase activity"/>
    <property type="evidence" value="ECO:0007669"/>
    <property type="project" value="UniProtKB-KW"/>
</dbReference>
<dbReference type="GO" id="GO:0008270">
    <property type="term" value="F:zinc ion binding"/>
    <property type="evidence" value="ECO:0007669"/>
    <property type="project" value="UniProtKB-KW"/>
</dbReference>
<dbReference type="Gene3D" id="3.30.40.10">
    <property type="entry name" value="Zinc/RING finger domain, C3HC4 (zinc finger)"/>
    <property type="match status" value="1"/>
</dbReference>
<dbReference type="InterPro" id="IPR001841">
    <property type="entry name" value="Znf_RING"/>
</dbReference>
<dbReference type="InterPro" id="IPR013083">
    <property type="entry name" value="Znf_RING/FYVE/PHD"/>
</dbReference>
<dbReference type="InterPro" id="IPR017907">
    <property type="entry name" value="Znf_RING_CS"/>
</dbReference>
<dbReference type="Pfam" id="PF13639">
    <property type="entry name" value="zf-RING_2"/>
    <property type="match status" value="1"/>
</dbReference>
<dbReference type="SUPFAM" id="SSF57850">
    <property type="entry name" value="RING/U-box"/>
    <property type="match status" value="1"/>
</dbReference>
<dbReference type="PROSITE" id="PS00518">
    <property type="entry name" value="ZF_RING_1"/>
    <property type="match status" value="1"/>
</dbReference>
<dbReference type="PROSITE" id="PS50089">
    <property type="entry name" value="ZF_RING_2"/>
    <property type="match status" value="1"/>
</dbReference>
<organismHost>
    <name type="scientific">Bos taurus</name>
    <name type="common">Bovine</name>
    <dbReference type="NCBI Taxonomy" id="9913"/>
</organismHost>
<comment type="domain">
    <text evidence="1">The RING-CH-type zinc finger domain is required for E3 ligase activity.</text>
</comment>
<comment type="miscellaneous">
    <text>Encodes the C-terminal region of the E3 ubiquitin ligase p28 protein present in variola virus.</text>
</comment>
<proteinExistence type="inferred from homology"/>